<organism>
    <name type="scientific">Dictyostelium discoideum</name>
    <name type="common">Social amoeba</name>
    <dbReference type="NCBI Taxonomy" id="44689"/>
    <lineage>
        <taxon>Eukaryota</taxon>
        <taxon>Amoebozoa</taxon>
        <taxon>Evosea</taxon>
        <taxon>Eumycetozoa</taxon>
        <taxon>Dictyostelia</taxon>
        <taxon>Dictyosteliales</taxon>
        <taxon>Dictyosteliaceae</taxon>
        <taxon>Dictyostelium</taxon>
    </lineage>
</organism>
<gene>
    <name type="primary">chmp3</name>
    <name type="synonym">vps24</name>
    <name type="ORF">DDB_G0284769</name>
</gene>
<comment type="function">
    <text evidence="1">Probable core component of the endosomal sorting required for transport complex III (ESCRT-III) which is involved in multivesicular bodies (MVBs) formation and sorting of endosomal cargo proteins into MVBs. MVBs contain intraluminal vesicles (ILVs) that are generated by invagination and scission from the limiting membrane of the endosome and are delivered to lysosomes enabling degradation of membrane proteins (By similarity).</text>
</comment>
<comment type="subunit">
    <text evidence="1">Probable core component of the endosomal sorting required for transport complex III (ESCRT-III).</text>
</comment>
<comment type="subcellular location">
    <subcellularLocation>
        <location evidence="1">Endosome membrane</location>
        <topology evidence="1">Peripheral membrane protein</topology>
    </subcellularLocation>
</comment>
<comment type="similarity">
    <text evidence="4">Belongs to the SNF7 family.</text>
</comment>
<evidence type="ECO:0000250" key="1"/>
<evidence type="ECO:0000255" key="2"/>
<evidence type="ECO:0000256" key="3">
    <source>
        <dbReference type="SAM" id="MobiDB-lite"/>
    </source>
</evidence>
<evidence type="ECO:0000305" key="4"/>
<dbReference type="EMBL" id="AAFI02000071">
    <property type="protein sequence ID" value="EAL65037.1"/>
    <property type="molecule type" value="Genomic_DNA"/>
</dbReference>
<dbReference type="RefSeq" id="XP_638395.1">
    <property type="nucleotide sequence ID" value="XM_633303.1"/>
</dbReference>
<dbReference type="SMR" id="Q54P63"/>
<dbReference type="FunCoup" id="Q54P63">
    <property type="interactions" value="500"/>
</dbReference>
<dbReference type="STRING" id="44689.Q54P63"/>
<dbReference type="PaxDb" id="44689-DDB0234036"/>
<dbReference type="EnsemblProtists" id="EAL65037">
    <property type="protein sequence ID" value="EAL65037"/>
    <property type="gene ID" value="DDB_G0284769"/>
</dbReference>
<dbReference type="GeneID" id="8624764"/>
<dbReference type="KEGG" id="ddi:DDB_G0284769"/>
<dbReference type="dictyBase" id="DDB_G0284769">
    <property type="gene designation" value="vps24"/>
</dbReference>
<dbReference type="VEuPathDB" id="AmoebaDB:DDB_G0284769"/>
<dbReference type="eggNOG" id="KOG3229">
    <property type="taxonomic scope" value="Eukaryota"/>
</dbReference>
<dbReference type="HOGENOM" id="CLU_069208_0_2_1"/>
<dbReference type="InParanoid" id="Q54P63"/>
<dbReference type="OMA" id="KILWEVT"/>
<dbReference type="PhylomeDB" id="Q54P63"/>
<dbReference type="Reactome" id="R-DDI-1632852">
    <property type="pathway name" value="Macroautophagy"/>
</dbReference>
<dbReference type="Reactome" id="R-DDI-917729">
    <property type="pathway name" value="Endosomal Sorting Complex Required For Transport (ESCRT)"/>
</dbReference>
<dbReference type="Reactome" id="R-DDI-9668328">
    <property type="pathway name" value="Sealing of the nuclear envelope (NE) by ESCRT-III"/>
</dbReference>
<dbReference type="PRO" id="PR:Q54P63"/>
<dbReference type="Proteomes" id="UP000002195">
    <property type="component" value="Chromosome 4"/>
</dbReference>
<dbReference type="GO" id="GO:0000815">
    <property type="term" value="C:ESCRT III complex"/>
    <property type="evidence" value="ECO:0000250"/>
    <property type="project" value="dictyBase"/>
</dbReference>
<dbReference type="GO" id="GO:0005771">
    <property type="term" value="C:multivesicular body"/>
    <property type="evidence" value="ECO:0000318"/>
    <property type="project" value="GO_Central"/>
</dbReference>
<dbReference type="GO" id="GO:0032509">
    <property type="term" value="P:endosome transport via multivesicular body sorting pathway"/>
    <property type="evidence" value="ECO:0000318"/>
    <property type="project" value="GO_Central"/>
</dbReference>
<dbReference type="GO" id="GO:0045324">
    <property type="term" value="P:late endosome to vacuole transport"/>
    <property type="evidence" value="ECO:0000318"/>
    <property type="project" value="GO_Central"/>
</dbReference>
<dbReference type="GO" id="GO:0015031">
    <property type="term" value="P:protein transport"/>
    <property type="evidence" value="ECO:0000318"/>
    <property type="project" value="GO_Central"/>
</dbReference>
<dbReference type="Gene3D" id="6.10.140.1230">
    <property type="match status" value="1"/>
</dbReference>
<dbReference type="InterPro" id="IPR005024">
    <property type="entry name" value="Snf7_fam"/>
</dbReference>
<dbReference type="PANTHER" id="PTHR10476">
    <property type="entry name" value="CHARGED MULTIVESICULAR BODY PROTEIN"/>
    <property type="match status" value="1"/>
</dbReference>
<dbReference type="Pfam" id="PF03357">
    <property type="entry name" value="Snf7"/>
    <property type="match status" value="1"/>
</dbReference>
<proteinExistence type="inferred from homology"/>
<sequence>MFSFLKKPTPEELVKKWKRELRREDRGLDTQLRAIDMQEKKTVRMIKERVKAGDQKSAKTLAKEIVNSRKAKERIYTAKAQMNSVSMQLQSNLAMTKVQGNLAKSTEIMKMMNDLIKLPELNKVMMAMGSEMTKAGIMEEMISDVFDMQGEDLEEEAEMEVNKIMDEILVSGPQVSSAPLETHQQEEVVQEKQEDSELLDRLKALKS</sequence>
<protein>
    <recommendedName>
        <fullName>Charged multivesicular body protein 3</fullName>
    </recommendedName>
    <alternativeName>
        <fullName>Vacuolar protein-sorting-associated protein 24</fullName>
    </alternativeName>
</protein>
<accession>Q54P63</accession>
<feature type="chain" id="PRO_0000367440" description="Charged multivesicular body protein 3">
    <location>
        <begin position="1"/>
        <end position="207"/>
    </location>
</feature>
<feature type="region of interest" description="Disordered" evidence="3">
    <location>
        <begin position="174"/>
        <end position="207"/>
    </location>
</feature>
<feature type="coiled-coil region" evidence="2">
    <location>
        <begin position="183"/>
        <end position="207"/>
    </location>
</feature>
<feature type="compositionally biased region" description="Basic and acidic residues" evidence="3">
    <location>
        <begin position="183"/>
        <end position="207"/>
    </location>
</feature>
<name>CHMP3_DICDI</name>
<keyword id="KW-0175">Coiled coil</keyword>
<keyword id="KW-0967">Endosome</keyword>
<keyword id="KW-0472">Membrane</keyword>
<keyword id="KW-0653">Protein transport</keyword>
<keyword id="KW-1185">Reference proteome</keyword>
<keyword id="KW-0813">Transport</keyword>
<reference key="1">
    <citation type="journal article" date="2005" name="Nature">
        <title>The genome of the social amoeba Dictyostelium discoideum.</title>
        <authorList>
            <person name="Eichinger L."/>
            <person name="Pachebat J.A."/>
            <person name="Gloeckner G."/>
            <person name="Rajandream M.A."/>
            <person name="Sucgang R."/>
            <person name="Berriman M."/>
            <person name="Song J."/>
            <person name="Olsen R."/>
            <person name="Szafranski K."/>
            <person name="Xu Q."/>
            <person name="Tunggal B."/>
            <person name="Kummerfeld S."/>
            <person name="Madera M."/>
            <person name="Konfortov B.A."/>
            <person name="Rivero F."/>
            <person name="Bankier A.T."/>
            <person name="Lehmann R."/>
            <person name="Hamlin N."/>
            <person name="Davies R."/>
            <person name="Gaudet P."/>
            <person name="Fey P."/>
            <person name="Pilcher K."/>
            <person name="Chen G."/>
            <person name="Saunders D."/>
            <person name="Sodergren E.J."/>
            <person name="Davis P."/>
            <person name="Kerhornou A."/>
            <person name="Nie X."/>
            <person name="Hall N."/>
            <person name="Anjard C."/>
            <person name="Hemphill L."/>
            <person name="Bason N."/>
            <person name="Farbrother P."/>
            <person name="Desany B."/>
            <person name="Just E."/>
            <person name="Morio T."/>
            <person name="Rost R."/>
            <person name="Churcher C.M."/>
            <person name="Cooper J."/>
            <person name="Haydock S."/>
            <person name="van Driessche N."/>
            <person name="Cronin A."/>
            <person name="Goodhead I."/>
            <person name="Muzny D.M."/>
            <person name="Mourier T."/>
            <person name="Pain A."/>
            <person name="Lu M."/>
            <person name="Harper D."/>
            <person name="Lindsay R."/>
            <person name="Hauser H."/>
            <person name="James K.D."/>
            <person name="Quiles M."/>
            <person name="Madan Babu M."/>
            <person name="Saito T."/>
            <person name="Buchrieser C."/>
            <person name="Wardroper A."/>
            <person name="Felder M."/>
            <person name="Thangavelu M."/>
            <person name="Johnson D."/>
            <person name="Knights A."/>
            <person name="Loulseged H."/>
            <person name="Mungall K.L."/>
            <person name="Oliver K."/>
            <person name="Price C."/>
            <person name="Quail M.A."/>
            <person name="Urushihara H."/>
            <person name="Hernandez J."/>
            <person name="Rabbinowitsch E."/>
            <person name="Steffen D."/>
            <person name="Sanders M."/>
            <person name="Ma J."/>
            <person name="Kohara Y."/>
            <person name="Sharp S."/>
            <person name="Simmonds M.N."/>
            <person name="Spiegler S."/>
            <person name="Tivey A."/>
            <person name="Sugano S."/>
            <person name="White B."/>
            <person name="Walker D."/>
            <person name="Woodward J.R."/>
            <person name="Winckler T."/>
            <person name="Tanaka Y."/>
            <person name="Shaulsky G."/>
            <person name="Schleicher M."/>
            <person name="Weinstock G.M."/>
            <person name="Rosenthal A."/>
            <person name="Cox E.C."/>
            <person name="Chisholm R.L."/>
            <person name="Gibbs R.A."/>
            <person name="Loomis W.F."/>
            <person name="Platzer M."/>
            <person name="Kay R.R."/>
            <person name="Williams J.G."/>
            <person name="Dear P.H."/>
            <person name="Noegel A.A."/>
            <person name="Barrell B.G."/>
            <person name="Kuspa A."/>
        </authorList>
    </citation>
    <scope>NUCLEOTIDE SEQUENCE [LARGE SCALE GENOMIC DNA]</scope>
    <source>
        <strain>AX4</strain>
    </source>
</reference>